<reference key="1">
    <citation type="journal article" date="1993" name="Genomics">
        <title>Molecular characterization and evolution of the SPRR family of keratinocyte differentiation markers encoding small proline-rich proteins.</title>
        <authorList>
            <person name="Gibbs S."/>
            <person name="Fijneman R."/>
            <person name="Wiegant J."/>
            <person name="Geurts van Kessel A."/>
            <person name="van de Putte P."/>
            <person name="Backendorf C."/>
        </authorList>
    </citation>
    <scope>NUCLEOTIDE SEQUENCE [GENOMIC DNA]</scope>
    <scope>VARIANTS GLN-42 AND ILE-61</scope>
    <source>
        <tissue>Skin</tissue>
    </source>
</reference>
<reference key="2">
    <citation type="journal article" date="1994" name="Arch. Oral Biol.">
        <title>Differential expression of protease inhibitor and small proline-rich protein genes between normal human oral tissue and odontogenic keratocysts.</title>
        <authorList>
            <person name="Robinson P.A."/>
            <person name="Marley J.J."/>
            <person name="High A.S."/>
            <person name="Hume W.J."/>
        </authorList>
    </citation>
    <scope>NUCLEOTIDE SEQUENCE [GENOMIC DNA]</scope>
</reference>
<reference key="3">
    <citation type="submission" date="2004-09" db="EMBL/GenBank/DDBJ databases">
        <authorList>
            <consortium name="NIEHS SNPs program"/>
        </authorList>
    </citation>
    <scope>NUCLEOTIDE SEQUENCE [GENOMIC DNA]</scope>
    <scope>VARIANTS GLN-42 AND ILE-61</scope>
</reference>
<reference key="4">
    <citation type="journal article" date="2006" name="Nature">
        <title>The DNA sequence and biological annotation of human chromosome 1.</title>
        <authorList>
            <person name="Gregory S.G."/>
            <person name="Barlow K.F."/>
            <person name="McLay K.E."/>
            <person name="Kaul R."/>
            <person name="Swarbreck D."/>
            <person name="Dunham A."/>
            <person name="Scott C.E."/>
            <person name="Howe K.L."/>
            <person name="Woodfine K."/>
            <person name="Spencer C.C.A."/>
            <person name="Jones M.C."/>
            <person name="Gillson C."/>
            <person name="Searle S."/>
            <person name="Zhou Y."/>
            <person name="Kokocinski F."/>
            <person name="McDonald L."/>
            <person name="Evans R."/>
            <person name="Phillips K."/>
            <person name="Atkinson A."/>
            <person name="Cooper R."/>
            <person name="Jones C."/>
            <person name="Hall R.E."/>
            <person name="Andrews T.D."/>
            <person name="Lloyd C."/>
            <person name="Ainscough R."/>
            <person name="Almeida J.P."/>
            <person name="Ambrose K.D."/>
            <person name="Anderson F."/>
            <person name="Andrew R.W."/>
            <person name="Ashwell R.I.S."/>
            <person name="Aubin K."/>
            <person name="Babbage A.K."/>
            <person name="Bagguley C.L."/>
            <person name="Bailey J."/>
            <person name="Beasley H."/>
            <person name="Bethel G."/>
            <person name="Bird C.P."/>
            <person name="Bray-Allen S."/>
            <person name="Brown J.Y."/>
            <person name="Brown A.J."/>
            <person name="Buckley D."/>
            <person name="Burton J."/>
            <person name="Bye J."/>
            <person name="Carder C."/>
            <person name="Chapman J.C."/>
            <person name="Clark S.Y."/>
            <person name="Clarke G."/>
            <person name="Clee C."/>
            <person name="Cobley V."/>
            <person name="Collier R.E."/>
            <person name="Corby N."/>
            <person name="Coville G.J."/>
            <person name="Davies J."/>
            <person name="Deadman R."/>
            <person name="Dunn M."/>
            <person name="Earthrowl M."/>
            <person name="Ellington A.G."/>
            <person name="Errington H."/>
            <person name="Frankish A."/>
            <person name="Frankland J."/>
            <person name="French L."/>
            <person name="Garner P."/>
            <person name="Garnett J."/>
            <person name="Gay L."/>
            <person name="Ghori M.R.J."/>
            <person name="Gibson R."/>
            <person name="Gilby L.M."/>
            <person name="Gillett W."/>
            <person name="Glithero R.J."/>
            <person name="Grafham D.V."/>
            <person name="Griffiths C."/>
            <person name="Griffiths-Jones S."/>
            <person name="Grocock R."/>
            <person name="Hammond S."/>
            <person name="Harrison E.S.I."/>
            <person name="Hart E."/>
            <person name="Haugen E."/>
            <person name="Heath P.D."/>
            <person name="Holmes S."/>
            <person name="Holt K."/>
            <person name="Howden P.J."/>
            <person name="Hunt A.R."/>
            <person name="Hunt S.E."/>
            <person name="Hunter G."/>
            <person name="Isherwood J."/>
            <person name="James R."/>
            <person name="Johnson C."/>
            <person name="Johnson D."/>
            <person name="Joy A."/>
            <person name="Kay M."/>
            <person name="Kershaw J.K."/>
            <person name="Kibukawa M."/>
            <person name="Kimberley A.M."/>
            <person name="King A."/>
            <person name="Knights A.J."/>
            <person name="Lad H."/>
            <person name="Laird G."/>
            <person name="Lawlor S."/>
            <person name="Leongamornlert D.A."/>
            <person name="Lloyd D.M."/>
            <person name="Loveland J."/>
            <person name="Lovell J."/>
            <person name="Lush M.J."/>
            <person name="Lyne R."/>
            <person name="Martin S."/>
            <person name="Mashreghi-Mohammadi M."/>
            <person name="Matthews L."/>
            <person name="Matthews N.S.W."/>
            <person name="McLaren S."/>
            <person name="Milne S."/>
            <person name="Mistry S."/>
            <person name="Moore M.J.F."/>
            <person name="Nickerson T."/>
            <person name="O'Dell C.N."/>
            <person name="Oliver K."/>
            <person name="Palmeiri A."/>
            <person name="Palmer S.A."/>
            <person name="Parker A."/>
            <person name="Patel D."/>
            <person name="Pearce A.V."/>
            <person name="Peck A.I."/>
            <person name="Pelan S."/>
            <person name="Phelps K."/>
            <person name="Phillimore B.J."/>
            <person name="Plumb R."/>
            <person name="Rajan J."/>
            <person name="Raymond C."/>
            <person name="Rouse G."/>
            <person name="Saenphimmachak C."/>
            <person name="Sehra H.K."/>
            <person name="Sheridan E."/>
            <person name="Shownkeen R."/>
            <person name="Sims S."/>
            <person name="Skuce C.D."/>
            <person name="Smith M."/>
            <person name="Steward C."/>
            <person name="Subramanian S."/>
            <person name="Sycamore N."/>
            <person name="Tracey A."/>
            <person name="Tromans A."/>
            <person name="Van Helmond Z."/>
            <person name="Wall M."/>
            <person name="Wallis J.M."/>
            <person name="White S."/>
            <person name="Whitehead S.L."/>
            <person name="Wilkinson J.E."/>
            <person name="Willey D.L."/>
            <person name="Williams H."/>
            <person name="Wilming L."/>
            <person name="Wray P.W."/>
            <person name="Wu Z."/>
            <person name="Coulson A."/>
            <person name="Vaudin M."/>
            <person name="Sulston J.E."/>
            <person name="Durbin R.M."/>
            <person name="Hubbard T."/>
            <person name="Wooster R."/>
            <person name="Dunham I."/>
            <person name="Carter N.P."/>
            <person name="McVean G."/>
            <person name="Ross M.T."/>
            <person name="Harrow J."/>
            <person name="Olson M.V."/>
            <person name="Beck S."/>
            <person name="Rogers J."/>
            <person name="Bentley D.R."/>
        </authorList>
    </citation>
    <scope>NUCLEOTIDE SEQUENCE [LARGE SCALE GENOMIC DNA]</scope>
</reference>
<reference key="5">
    <citation type="submission" date="2005-09" db="EMBL/GenBank/DDBJ databases">
        <authorList>
            <person name="Mural R.J."/>
            <person name="Istrail S."/>
            <person name="Sutton G.G."/>
            <person name="Florea L."/>
            <person name="Halpern A.L."/>
            <person name="Mobarry C.M."/>
            <person name="Lippert R."/>
            <person name="Walenz B."/>
            <person name="Shatkay H."/>
            <person name="Dew I."/>
            <person name="Miller J.R."/>
            <person name="Flanigan M.J."/>
            <person name="Edwards N.J."/>
            <person name="Bolanos R."/>
            <person name="Fasulo D."/>
            <person name="Halldorsson B.V."/>
            <person name="Hannenhalli S."/>
            <person name="Turner R."/>
            <person name="Yooseph S."/>
            <person name="Lu F."/>
            <person name="Nusskern D.R."/>
            <person name="Shue B.C."/>
            <person name="Zheng X.H."/>
            <person name="Zhong F."/>
            <person name="Delcher A.L."/>
            <person name="Huson D.H."/>
            <person name="Kravitz S.A."/>
            <person name="Mouchard L."/>
            <person name="Reinert K."/>
            <person name="Remington K.A."/>
            <person name="Clark A.G."/>
            <person name="Waterman M.S."/>
            <person name="Eichler E.E."/>
            <person name="Adams M.D."/>
            <person name="Hunkapiller M.W."/>
            <person name="Myers E.W."/>
            <person name="Venter J.C."/>
        </authorList>
    </citation>
    <scope>NUCLEOTIDE SEQUENCE [LARGE SCALE GENOMIC DNA]</scope>
</reference>
<reference key="6">
    <citation type="journal article" date="2004" name="Genome Res.">
        <title>The status, quality, and expansion of the NIH full-length cDNA project: the Mammalian Gene Collection (MGC).</title>
        <authorList>
            <consortium name="The MGC Project Team"/>
        </authorList>
    </citation>
    <scope>NUCLEOTIDE SEQUENCE [LARGE SCALE MRNA]</scope>
    <scope>VARIANTS GLN-42 AND ILE-61</scope>
</reference>
<reference key="7">
    <citation type="journal article" date="1995" name="J. Invest. Dermatol.">
        <title>The pancornulins: a group of small proline rich-related cornified envelope precursors with bifunctional capabilities in isopeptide bond formation.</title>
        <authorList>
            <person name="Greco M.A."/>
            <person name="Lorand L."/>
            <person name="Lane W.S."/>
            <person name="Baden H.P."/>
            <person name="Parameswaran K.N.P."/>
            <person name="Kvedar J.C."/>
        </authorList>
    </citation>
    <scope>PROTEIN SEQUENCE OF 8-31 AND 53-85</scope>
    <source>
        <tissue>Keratinocyte</tissue>
    </source>
</reference>
<sequence>MNSQQQKQPCTPPPQPQQQQVKQPCQPPPQEPCIPKTKEPCHPKVPEPCHPKVPEPCQPKVPEPCQPKVPEPCPSTVTPAPAQQKTKQK</sequence>
<proteinExistence type="evidence at protein level"/>
<accession>P35321</accession>
<accession>B1AN47</accession>
<accession>D3DV31</accession>
<accession>Q2M303</accession>
<accession>Q9UDG4</accession>
<name>SPR1A_HUMAN</name>
<evidence type="ECO:0000256" key="1">
    <source>
        <dbReference type="SAM" id="MobiDB-lite"/>
    </source>
</evidence>
<evidence type="ECO:0000269" key="2">
    <source>
    </source>
</evidence>
<evidence type="ECO:0000269" key="3">
    <source>
    </source>
</evidence>
<evidence type="ECO:0000269" key="4">
    <source ref="3"/>
</evidence>
<evidence type="ECO:0000305" key="5"/>
<feature type="chain" id="PRO_0000149995" description="Cornifin-A">
    <location>
        <begin position="1"/>
        <end position="89"/>
    </location>
</feature>
<feature type="repeat" description="1">
    <location>
        <begin position="3"/>
        <end position="14"/>
    </location>
</feature>
<feature type="repeat" description="2">
    <location>
        <begin position="18"/>
        <end position="29"/>
    </location>
</feature>
<feature type="repeat" description="1">
    <location>
        <begin position="31"/>
        <end position="38"/>
    </location>
</feature>
<feature type="repeat" description="2">
    <location>
        <begin position="39"/>
        <end position="46"/>
    </location>
</feature>
<feature type="repeat" description="3">
    <location>
        <begin position="47"/>
        <end position="54"/>
    </location>
</feature>
<feature type="repeat" description="4">
    <location>
        <begin position="55"/>
        <end position="62"/>
    </location>
</feature>
<feature type="repeat" description="5">
    <location>
        <begin position="63"/>
        <end position="70"/>
    </location>
</feature>
<feature type="repeat" description="6">
    <location>
        <begin position="71"/>
        <end position="78"/>
    </location>
</feature>
<feature type="region of interest" description="Disordered" evidence="1">
    <location>
        <begin position="1"/>
        <end position="29"/>
    </location>
</feature>
<feature type="region of interest" description="2 X 12 AA approximate repeats">
    <location>
        <begin position="3"/>
        <end position="29"/>
    </location>
</feature>
<feature type="region of interest" description="6 X 8 AA approximate tandem repeats">
    <location>
        <begin position="31"/>
        <end position="78"/>
    </location>
</feature>
<feature type="region of interest" description="Disordered" evidence="1">
    <location>
        <begin position="68"/>
        <end position="89"/>
    </location>
</feature>
<feature type="compositionally biased region" description="Polar residues" evidence="1">
    <location>
        <begin position="75"/>
        <end position="89"/>
    </location>
</feature>
<feature type="sequence variant" id="VAR_021097" description="In dbSNP:rs1611762." evidence="2 3 4">
    <original>H</original>
    <variation>Q</variation>
    <location>
        <position position="42"/>
    </location>
</feature>
<feature type="sequence variant" id="VAR_021098" description="In dbSNP:rs1611764." evidence="2 3 4">
    <original>V</original>
    <variation>I</variation>
    <location>
        <position position="61"/>
    </location>
</feature>
<feature type="sequence conflict" description="In Ref. 7; AA sequence." evidence="5" ref="7">
    <original>V</original>
    <variation>I</variation>
    <location>
        <position position="53"/>
    </location>
</feature>
<feature type="sequence conflict" description="In Ref. 7; AA sequence." evidence="5" ref="7">
    <location>
        <position position="65"/>
    </location>
</feature>
<keyword id="KW-0963">Cytoplasm</keyword>
<keyword id="KW-0903">Direct protein sequencing</keyword>
<keyword id="KW-0417">Keratinization</keyword>
<keyword id="KW-1267">Proteomics identification</keyword>
<keyword id="KW-1185">Reference proteome</keyword>
<keyword id="KW-0677">Repeat</keyword>
<dbReference type="EMBL" id="L05187">
    <property type="protein sequence ID" value="AAC26838.1"/>
    <property type="molecule type" value="Genomic_DNA"/>
</dbReference>
<dbReference type="EMBL" id="AY755659">
    <property type="protein sequence ID" value="AAU88143.1"/>
    <property type="molecule type" value="Genomic_DNA"/>
</dbReference>
<dbReference type="EMBL" id="AL356867">
    <property type="status" value="NOT_ANNOTATED_CDS"/>
    <property type="molecule type" value="Genomic_DNA"/>
</dbReference>
<dbReference type="EMBL" id="CH471121">
    <property type="protein sequence ID" value="EAW53355.1"/>
    <property type="molecule type" value="Genomic_DNA"/>
</dbReference>
<dbReference type="EMBL" id="CH471121">
    <property type="protein sequence ID" value="EAW53356.1"/>
    <property type="molecule type" value="Genomic_DNA"/>
</dbReference>
<dbReference type="EMBL" id="BC105081">
    <property type="protein sequence ID" value="AAI05082.1"/>
    <property type="molecule type" value="mRNA"/>
</dbReference>
<dbReference type="EMBL" id="BC105083">
    <property type="protein sequence ID" value="AAI05084.1"/>
    <property type="molecule type" value="mRNA"/>
</dbReference>
<dbReference type="CCDS" id="CCDS1032.1"/>
<dbReference type="PIR" id="I54187">
    <property type="entry name" value="I54187"/>
</dbReference>
<dbReference type="RefSeq" id="NP_001186757.1">
    <property type="nucleotide sequence ID" value="NM_001199828.2"/>
</dbReference>
<dbReference type="RefSeq" id="NP_005978.2">
    <property type="nucleotide sequence ID" value="NM_005987.3"/>
</dbReference>
<dbReference type="BioGRID" id="112576">
    <property type="interactions" value="22"/>
</dbReference>
<dbReference type="FunCoup" id="P35321">
    <property type="interactions" value="51"/>
</dbReference>
<dbReference type="IntAct" id="P35321">
    <property type="interactions" value="10"/>
</dbReference>
<dbReference type="MINT" id="P35321"/>
<dbReference type="STRING" id="9606.ENSP00000357751"/>
<dbReference type="GlyGen" id="P35321">
    <property type="glycosylation" value="2 sites, 1 O-linked glycan (1 site)"/>
</dbReference>
<dbReference type="iPTMnet" id="P35321"/>
<dbReference type="PhosphoSitePlus" id="P35321"/>
<dbReference type="BioMuta" id="SPRR1A"/>
<dbReference type="DMDM" id="215273890"/>
<dbReference type="jPOST" id="P35321"/>
<dbReference type="MassIVE" id="P35321"/>
<dbReference type="PaxDb" id="9606-ENSP00000357751"/>
<dbReference type="PeptideAtlas" id="P35321"/>
<dbReference type="ProteomicsDB" id="55022"/>
<dbReference type="Antibodypedia" id="54235">
    <property type="antibodies" value="99 antibodies from 20 providers"/>
</dbReference>
<dbReference type="DNASU" id="6698"/>
<dbReference type="Ensembl" id="ENST00000368762.2">
    <property type="protein sequence ID" value="ENSP00000357751.1"/>
    <property type="gene ID" value="ENSG00000169474.5"/>
</dbReference>
<dbReference type="Ensembl" id="ENST00000696219.1">
    <property type="protein sequence ID" value="ENSP00000512485.1"/>
    <property type="gene ID" value="ENSG00000169474.5"/>
</dbReference>
<dbReference type="GeneID" id="6698"/>
<dbReference type="KEGG" id="hsa:6698"/>
<dbReference type="MANE-Select" id="ENST00000368762.2">
    <property type="protein sequence ID" value="ENSP00000357751.1"/>
    <property type="RefSeq nucleotide sequence ID" value="NM_005987.4"/>
    <property type="RefSeq protein sequence ID" value="NP_005978.2"/>
</dbReference>
<dbReference type="UCSC" id="uc057lan.1">
    <property type="organism name" value="human"/>
</dbReference>
<dbReference type="AGR" id="HGNC:11259"/>
<dbReference type="CTD" id="6698"/>
<dbReference type="DisGeNET" id="6698"/>
<dbReference type="GeneCards" id="SPRR1A"/>
<dbReference type="HGNC" id="HGNC:11259">
    <property type="gene designation" value="SPRR1A"/>
</dbReference>
<dbReference type="HPA" id="ENSG00000169474">
    <property type="expression patterns" value="Tissue enhanced (cervix, esophagus, vagina)"/>
</dbReference>
<dbReference type="MIM" id="182265">
    <property type="type" value="gene"/>
</dbReference>
<dbReference type="neXtProt" id="NX_P35321"/>
<dbReference type="OpenTargets" id="ENSG00000169474"/>
<dbReference type="PharmGKB" id="PA36088"/>
<dbReference type="VEuPathDB" id="HostDB:ENSG00000169474"/>
<dbReference type="eggNOG" id="ENOG502SCIR">
    <property type="taxonomic scope" value="Eukaryota"/>
</dbReference>
<dbReference type="GeneTree" id="ENSGT00940000163248"/>
<dbReference type="HOGENOM" id="CLU_186226_0_0_1"/>
<dbReference type="InParanoid" id="P35321"/>
<dbReference type="OMA" id="TPEPCGY"/>
<dbReference type="OrthoDB" id="9837279at2759"/>
<dbReference type="PAN-GO" id="P35321">
    <property type="GO annotations" value="2 GO annotations based on evolutionary models"/>
</dbReference>
<dbReference type="PhylomeDB" id="P35321"/>
<dbReference type="TreeFam" id="TF338205"/>
<dbReference type="PathwayCommons" id="P35321"/>
<dbReference type="Reactome" id="R-HSA-6809371">
    <property type="pathway name" value="Formation of the cornified envelope"/>
</dbReference>
<dbReference type="SignaLink" id="P35321"/>
<dbReference type="BioGRID-ORCS" id="6698">
    <property type="hits" value="4 hits in 1043 CRISPR screens"/>
</dbReference>
<dbReference type="ChiTaRS" id="SPRR1A">
    <property type="organism name" value="human"/>
</dbReference>
<dbReference type="GeneWiki" id="SPRR1A"/>
<dbReference type="GenomeRNAi" id="6698"/>
<dbReference type="Pharos" id="P35321">
    <property type="development level" value="Tbio"/>
</dbReference>
<dbReference type="PRO" id="PR:P35321"/>
<dbReference type="Proteomes" id="UP000005640">
    <property type="component" value="Chromosome 1"/>
</dbReference>
<dbReference type="RNAct" id="P35321">
    <property type="molecule type" value="protein"/>
</dbReference>
<dbReference type="Bgee" id="ENSG00000169474">
    <property type="expression patterns" value="Expressed in cervix squamous epithelium and 133 other cell types or tissues"/>
</dbReference>
<dbReference type="GO" id="GO:0001533">
    <property type="term" value="C:cornified envelope"/>
    <property type="evidence" value="ECO:0000314"/>
    <property type="project" value="UniProtKB"/>
</dbReference>
<dbReference type="GO" id="GO:0005829">
    <property type="term" value="C:cytosol"/>
    <property type="evidence" value="ECO:0000304"/>
    <property type="project" value="Reactome"/>
</dbReference>
<dbReference type="GO" id="GO:0030280">
    <property type="term" value="F:structural constituent of skin epidermis"/>
    <property type="evidence" value="ECO:0000314"/>
    <property type="project" value="CAFA"/>
</dbReference>
<dbReference type="GO" id="GO:0005198">
    <property type="term" value="F:structural molecule activity"/>
    <property type="evidence" value="ECO:0000304"/>
    <property type="project" value="ProtInc"/>
</dbReference>
<dbReference type="GO" id="GO:0008544">
    <property type="term" value="P:epidermis development"/>
    <property type="evidence" value="ECO:0000304"/>
    <property type="project" value="ProtInc"/>
</dbReference>
<dbReference type="GO" id="GO:0031424">
    <property type="term" value="P:keratinization"/>
    <property type="evidence" value="ECO:0007669"/>
    <property type="project" value="UniProtKB-KW"/>
</dbReference>
<dbReference type="GO" id="GO:0030216">
    <property type="term" value="P:keratinocyte differentiation"/>
    <property type="evidence" value="ECO:0000314"/>
    <property type="project" value="UniProtKB"/>
</dbReference>
<dbReference type="GO" id="GO:0018149">
    <property type="term" value="P:peptide cross-linking"/>
    <property type="evidence" value="ECO:0000314"/>
    <property type="project" value="UniProtKB"/>
</dbReference>
<dbReference type="Pfam" id="PF02389">
    <property type="entry name" value="Cornifin"/>
    <property type="match status" value="1"/>
</dbReference>
<dbReference type="PRINTS" id="PR00021">
    <property type="entry name" value="PRORICH"/>
</dbReference>
<protein>
    <recommendedName>
        <fullName>Cornifin-A</fullName>
    </recommendedName>
    <alternativeName>
        <fullName>19 kDa pancornulin</fullName>
    </alternativeName>
    <alternativeName>
        <fullName>SPRK</fullName>
    </alternativeName>
    <alternativeName>
        <fullName>Small proline-rich protein IA</fullName>
        <shortName>SPR-IA</shortName>
    </alternativeName>
</protein>
<organism>
    <name type="scientific">Homo sapiens</name>
    <name type="common">Human</name>
    <dbReference type="NCBI Taxonomy" id="9606"/>
    <lineage>
        <taxon>Eukaryota</taxon>
        <taxon>Metazoa</taxon>
        <taxon>Chordata</taxon>
        <taxon>Craniata</taxon>
        <taxon>Vertebrata</taxon>
        <taxon>Euteleostomi</taxon>
        <taxon>Mammalia</taxon>
        <taxon>Eutheria</taxon>
        <taxon>Euarchontoglires</taxon>
        <taxon>Primates</taxon>
        <taxon>Haplorrhini</taxon>
        <taxon>Catarrhini</taxon>
        <taxon>Hominidae</taxon>
        <taxon>Homo</taxon>
    </lineage>
</organism>
<comment type="function">
    <text>Cross-linked envelope protein of keratinocytes. It is a keratinocyte protein that first appears in the cell cytosol, but ultimately becomes cross-linked to membrane proteins by transglutaminase. All that results in the formation of an insoluble envelope beneath the plasma membrane.</text>
</comment>
<comment type="interaction">
    <interactant intactId="EBI-6149907">
        <id>P35321</id>
    </interactant>
    <interactant intactId="EBI-12111022">
        <id>Q8NBF1</id>
        <label>GLIS1</label>
    </interactant>
    <organismsDiffer>false</organismsDiffer>
    <experiments>3</experiments>
</comment>
<comment type="subcellular location">
    <subcellularLocation>
        <location>Cytoplasm</location>
    </subcellularLocation>
</comment>
<comment type="induction">
    <text>During squamous differentiation of epidermal keratinocytes.</text>
</comment>
<comment type="similarity">
    <text evidence="5">Belongs to the cornifin (SPRR) family.</text>
</comment>
<gene>
    <name type="primary">SPRR1A</name>
</gene>